<accession>P34144</accession>
<accession>Q54YK6</accession>
<accession>Q9GPU0</accession>
<reference key="1">
    <citation type="journal article" date="1993" name="Gene">
        <title>Cloning and characterization of seven novel Dictyostelium discoideum rac-related genes belonging to the rho family of GTPases.</title>
        <authorList>
            <person name="Bush J.M. IV"/>
            <person name="Franek K."/>
            <person name="Cardelli J.A."/>
        </authorList>
    </citation>
    <scope>NUCLEOTIDE SEQUENCE [MRNA]</scope>
    <source>
        <strain>AX3</strain>
    </source>
</reference>
<reference key="2">
    <citation type="journal article" date="2001" name="Nucleic Acids Res.">
        <title>The Dictyostelium discoideum family of Rho-related proteins.</title>
        <authorList>
            <person name="Rivero F."/>
            <person name="Dislich H."/>
            <person name="Gloeckner G."/>
            <person name="Noegel A.A."/>
        </authorList>
    </citation>
    <scope>NUCLEOTIDE SEQUENCE [GENOMIC DNA]</scope>
    <source>
        <strain>AX4</strain>
    </source>
</reference>
<reference key="3">
    <citation type="journal article" date="2005" name="Nature">
        <title>The genome of the social amoeba Dictyostelium discoideum.</title>
        <authorList>
            <person name="Eichinger L."/>
            <person name="Pachebat J.A."/>
            <person name="Gloeckner G."/>
            <person name="Rajandream M.A."/>
            <person name="Sucgang R."/>
            <person name="Berriman M."/>
            <person name="Song J."/>
            <person name="Olsen R."/>
            <person name="Szafranski K."/>
            <person name="Xu Q."/>
            <person name="Tunggal B."/>
            <person name="Kummerfeld S."/>
            <person name="Madera M."/>
            <person name="Konfortov B.A."/>
            <person name="Rivero F."/>
            <person name="Bankier A.T."/>
            <person name="Lehmann R."/>
            <person name="Hamlin N."/>
            <person name="Davies R."/>
            <person name="Gaudet P."/>
            <person name="Fey P."/>
            <person name="Pilcher K."/>
            <person name="Chen G."/>
            <person name="Saunders D."/>
            <person name="Sodergren E.J."/>
            <person name="Davis P."/>
            <person name="Kerhornou A."/>
            <person name="Nie X."/>
            <person name="Hall N."/>
            <person name="Anjard C."/>
            <person name="Hemphill L."/>
            <person name="Bason N."/>
            <person name="Farbrother P."/>
            <person name="Desany B."/>
            <person name="Just E."/>
            <person name="Morio T."/>
            <person name="Rost R."/>
            <person name="Churcher C.M."/>
            <person name="Cooper J."/>
            <person name="Haydock S."/>
            <person name="van Driessche N."/>
            <person name="Cronin A."/>
            <person name="Goodhead I."/>
            <person name="Muzny D.M."/>
            <person name="Mourier T."/>
            <person name="Pain A."/>
            <person name="Lu M."/>
            <person name="Harper D."/>
            <person name="Lindsay R."/>
            <person name="Hauser H."/>
            <person name="James K.D."/>
            <person name="Quiles M."/>
            <person name="Madan Babu M."/>
            <person name="Saito T."/>
            <person name="Buchrieser C."/>
            <person name="Wardroper A."/>
            <person name="Felder M."/>
            <person name="Thangavelu M."/>
            <person name="Johnson D."/>
            <person name="Knights A."/>
            <person name="Loulseged H."/>
            <person name="Mungall K.L."/>
            <person name="Oliver K."/>
            <person name="Price C."/>
            <person name="Quail M.A."/>
            <person name="Urushihara H."/>
            <person name="Hernandez J."/>
            <person name="Rabbinowitsch E."/>
            <person name="Steffen D."/>
            <person name="Sanders M."/>
            <person name="Ma J."/>
            <person name="Kohara Y."/>
            <person name="Sharp S."/>
            <person name="Simmonds M.N."/>
            <person name="Spiegler S."/>
            <person name="Tivey A."/>
            <person name="Sugano S."/>
            <person name="White B."/>
            <person name="Walker D."/>
            <person name="Woodward J.R."/>
            <person name="Winckler T."/>
            <person name="Tanaka Y."/>
            <person name="Shaulsky G."/>
            <person name="Schleicher M."/>
            <person name="Weinstock G.M."/>
            <person name="Rosenthal A."/>
            <person name="Cox E.C."/>
            <person name="Chisholm R.L."/>
            <person name="Gibbs R.A."/>
            <person name="Loomis W.F."/>
            <person name="Platzer M."/>
            <person name="Kay R.R."/>
            <person name="Williams J.G."/>
            <person name="Dear P.H."/>
            <person name="Noegel A.A."/>
            <person name="Barrell B.G."/>
            <person name="Kuspa A."/>
        </authorList>
    </citation>
    <scope>NUCLEOTIDE SEQUENCE [LARGE SCALE GENOMIC DNA]</scope>
    <source>
        <strain>AX4</strain>
    </source>
</reference>
<reference key="4">
    <citation type="journal article" date="1998" name="Mol. Biol. Cell">
        <title>DdLIM is a cytoskeleton-associated protein involved in the protrusion of lamellipodia in Dictyostelium.</title>
        <authorList>
            <person name="Prassler J."/>
            <person name="Murr A."/>
            <person name="Stocker S."/>
            <person name="Faix J."/>
            <person name="Murphy J."/>
            <person name="Marriott G."/>
        </authorList>
    </citation>
    <scope>INTERACTION WITH LIME</scope>
</reference>
<reference key="5">
    <citation type="journal article" date="1998" name="J. Cell Sci.">
        <title>The IQGAP-related protein DGAP1 interacts with Rac and is involved in the modulation of the F-actin cytoskeleton and control of cell motility.</title>
        <authorList>
            <person name="Faix J."/>
            <person name="Clougherty C."/>
            <person name="Konzok A."/>
            <person name="Mintert U."/>
            <person name="Murphy J."/>
            <person name="Albrecht R."/>
            <person name="Muhlbauer B."/>
            <person name="Kuhlmann J."/>
        </authorList>
    </citation>
    <scope>INTERACTION WITH RGAA</scope>
</reference>
<reference key="6">
    <citation type="journal article" date="2000" name="J. Cell Sci.">
        <title>Rac1 GTPases control filopodia formation, cell motility, endocytosis, cytokinesis and development in Dictyostelium.</title>
        <authorList>
            <person name="Dumontier M."/>
            <person name="Hoecht P."/>
            <person name="Mintert U."/>
            <person name="Faix J."/>
        </authorList>
    </citation>
    <scope>INTERACTION WITH RGAA</scope>
    <scope>FUNCTION</scope>
</reference>
<reference key="7">
    <citation type="journal article" date="2005" name="Mol. Biol. Cell">
        <title>Cellular distribution and functions of wild-type and constitutively activated Dictyostelium PakB.</title>
        <authorList>
            <person name="de la Roche M."/>
            <person name="Mahasneh A."/>
            <person name="Lee S.-F."/>
            <person name="Rivero F."/>
            <person name="Cote G.P."/>
        </authorList>
    </citation>
    <scope>INTERACTION WITH PAKB</scope>
</reference>
<reference key="8">
    <citation type="journal article" date="2005" name="Nat. Cell Biol.">
        <title>The Diaphanous-related formin dDia2 is required for the formation and maintenance of filopodia.</title>
        <authorList>
            <person name="Schirenbeck A."/>
            <person name="Bretschneider T."/>
            <person name="Arasada R."/>
            <person name="Schleicher M."/>
            <person name="Faix J."/>
        </authorList>
    </citation>
    <scope>INTERACTION WITH FORH</scope>
    <source>
        <strain>AX2</strain>
    </source>
</reference>
<reference key="9">
    <citation type="journal article" date="2006" name="Mol. Cell. Proteomics">
        <title>Proteomics fingerprinting of phagosome maturation and evidence for the role of a Galpha during uptake.</title>
        <authorList>
            <person name="Gotthardt D."/>
            <person name="Blancheteau V."/>
            <person name="Bosserhoff A."/>
            <person name="Ruppert T."/>
            <person name="Delorenzi M."/>
            <person name="Soldati T."/>
        </authorList>
    </citation>
    <scope>IDENTIFICATION BY MASS SPECTROMETRY [LARGE SCALE ANALYSIS]</scope>
    <source>
        <strain>AX2</strain>
    </source>
</reference>
<evidence type="ECO:0000250" key="1"/>
<evidence type="ECO:0000255" key="2"/>
<evidence type="ECO:0000269" key="3">
    <source>
    </source>
</evidence>
<evidence type="ECO:0000269" key="4">
    <source>
    </source>
</evidence>
<evidence type="ECO:0000269" key="5">
    <source>
    </source>
</evidence>
<evidence type="ECO:0000269" key="6">
    <source>
    </source>
</evidence>
<evidence type="ECO:0000269" key="7">
    <source>
    </source>
</evidence>
<evidence type="ECO:0000305" key="8"/>
<organism>
    <name type="scientific">Dictyostelium discoideum</name>
    <name type="common">Social amoeba</name>
    <dbReference type="NCBI Taxonomy" id="44689"/>
    <lineage>
        <taxon>Eukaryota</taxon>
        <taxon>Amoebozoa</taxon>
        <taxon>Evosea</taxon>
        <taxon>Eumycetozoa</taxon>
        <taxon>Dictyostelia</taxon>
        <taxon>Dictyosteliales</taxon>
        <taxon>Dictyosteliaceae</taxon>
        <taxon>Dictyostelium</taxon>
    </lineage>
</organism>
<sequence>MQAIKCVVVGDGAVGKTCLLISYTTNAFPGEYIPTVFDNYSANVMVDGKPINLGLWDTAGQEDYDRLRPLSYPQTDVFLICFSIISPSSFENVNGKWHPEICHHAPNVPIILVGTKLDMREDKETQDRLKEKKLYPISYEQGLAKMKEINAVKYLECSALTQKGLKTVFDEAIRAVINPPLSKKKKSSGGCNIL</sequence>
<keyword id="KW-1003">Cell membrane</keyword>
<keyword id="KW-0342">GTP-binding</keyword>
<keyword id="KW-0449">Lipoprotein</keyword>
<keyword id="KW-0472">Membrane</keyword>
<keyword id="KW-0488">Methylation</keyword>
<keyword id="KW-0547">Nucleotide-binding</keyword>
<keyword id="KW-0636">Prenylation</keyword>
<keyword id="KW-1185">Reference proteome</keyword>
<gene>
    <name type="primary">rac1A</name>
    <name type="ORF">DDB_G0277869</name>
</gene>
<dbReference type="EMBL" id="L11588">
    <property type="protein sequence ID" value="AAC37391.1"/>
    <property type="molecule type" value="mRNA"/>
</dbReference>
<dbReference type="EMBL" id="AF309947">
    <property type="protein sequence ID" value="AAG45106.1"/>
    <property type="molecule type" value="Genomic_DNA"/>
</dbReference>
<dbReference type="EMBL" id="AAFI02000023">
    <property type="protein sequence ID" value="EAL68107.1"/>
    <property type="molecule type" value="Genomic_DNA"/>
</dbReference>
<dbReference type="RefSeq" id="XP_642196.1">
    <property type="nucleotide sequence ID" value="XM_637104.1"/>
</dbReference>
<dbReference type="SMR" id="P34144"/>
<dbReference type="FunCoup" id="P34144">
    <property type="interactions" value="393"/>
</dbReference>
<dbReference type="IntAct" id="P34144">
    <property type="interactions" value="7"/>
</dbReference>
<dbReference type="STRING" id="44689.P34144"/>
<dbReference type="PaxDb" id="44689-DDB0214822"/>
<dbReference type="EnsemblProtists" id="EAL68107">
    <property type="protein sequence ID" value="EAL68107"/>
    <property type="gene ID" value="DDB_G0277869"/>
</dbReference>
<dbReference type="GeneID" id="8621403"/>
<dbReference type="KEGG" id="ddi:DDB_G0277869"/>
<dbReference type="dictyBase" id="DDB_G0277869">
    <property type="gene designation" value="rac1A"/>
</dbReference>
<dbReference type="VEuPathDB" id="AmoebaDB:DDB_G0277869"/>
<dbReference type="eggNOG" id="KOG0393">
    <property type="taxonomic scope" value="Eukaryota"/>
</dbReference>
<dbReference type="HOGENOM" id="CLU_041217_21_3_1"/>
<dbReference type="InParanoid" id="P34144"/>
<dbReference type="OMA" id="GDEPYTF"/>
<dbReference type="PhylomeDB" id="P34144"/>
<dbReference type="Reactome" id="R-DDI-193648">
    <property type="pathway name" value="NRAGE signals death through JNK"/>
</dbReference>
<dbReference type="Reactome" id="R-DDI-2029482">
    <property type="pathway name" value="Regulation of actin dynamics for phagocytic cup formation"/>
</dbReference>
<dbReference type="Reactome" id="R-DDI-389359">
    <property type="pathway name" value="CD28 dependent Vav1 pathway"/>
</dbReference>
<dbReference type="Reactome" id="R-DDI-3928662">
    <property type="pathway name" value="EPHB-mediated forward signaling"/>
</dbReference>
<dbReference type="Reactome" id="R-DDI-445144">
    <property type="pathway name" value="Signal transduction by L1"/>
</dbReference>
<dbReference type="Reactome" id="R-DDI-5626467">
    <property type="pathway name" value="RHO GTPases activate IQGAPs"/>
</dbReference>
<dbReference type="Reactome" id="R-DDI-5627123">
    <property type="pathway name" value="RHO GTPases activate PAKs"/>
</dbReference>
<dbReference type="Reactome" id="R-DDI-5663213">
    <property type="pathway name" value="RHO GTPases Activate WASPs and WAVEs"/>
</dbReference>
<dbReference type="Reactome" id="R-DDI-5687128">
    <property type="pathway name" value="MAPK6/MAPK4 signaling"/>
</dbReference>
<dbReference type="Reactome" id="R-DDI-6798695">
    <property type="pathway name" value="Neutrophil degranulation"/>
</dbReference>
<dbReference type="Reactome" id="R-DDI-8849471">
    <property type="pathway name" value="PTK6 Regulates RHO GTPases, RAS GTPase and MAP kinases"/>
</dbReference>
<dbReference type="Reactome" id="R-DDI-9013149">
    <property type="pathway name" value="RAC1 GTPase cycle"/>
</dbReference>
<dbReference type="Reactome" id="R-DDI-9013404">
    <property type="pathway name" value="RAC2 GTPase cycle"/>
</dbReference>
<dbReference type="Reactome" id="R-DDI-9013407">
    <property type="pathway name" value="RHOH GTPase cycle"/>
</dbReference>
<dbReference type="Reactome" id="R-DDI-9013408">
    <property type="pathway name" value="RHOG GTPase cycle"/>
</dbReference>
<dbReference type="Reactome" id="R-DDI-9013418">
    <property type="pathway name" value="RHOBTB2 GTPase cycle"/>
</dbReference>
<dbReference type="Reactome" id="R-DDI-9013422">
    <property type="pathway name" value="RHOBTB1 GTPase cycle"/>
</dbReference>
<dbReference type="Reactome" id="R-DDI-9013423">
    <property type="pathway name" value="RAC3 GTPase cycle"/>
</dbReference>
<dbReference type="Reactome" id="R-DDI-983231">
    <property type="pathway name" value="Factors involved in megakaryocyte development and platelet production"/>
</dbReference>
<dbReference type="PRO" id="PR:P34144"/>
<dbReference type="Proteomes" id="UP000002195">
    <property type="component" value="Chromosome 3"/>
</dbReference>
<dbReference type="GO" id="GO:0005938">
    <property type="term" value="C:cell cortex"/>
    <property type="evidence" value="ECO:0000314"/>
    <property type="project" value="dictyBase"/>
</dbReference>
<dbReference type="GO" id="GO:1904269">
    <property type="term" value="C:cell leading edge cell cortex"/>
    <property type="evidence" value="ECO:0000314"/>
    <property type="project" value="dictyBase"/>
</dbReference>
<dbReference type="GO" id="GO:0042995">
    <property type="term" value="C:cell projection"/>
    <property type="evidence" value="ECO:0000318"/>
    <property type="project" value="GO_Central"/>
</dbReference>
<dbReference type="GO" id="GO:0031254">
    <property type="term" value="C:cell trailing edge"/>
    <property type="evidence" value="ECO:0000314"/>
    <property type="project" value="dictyBase"/>
</dbReference>
<dbReference type="GO" id="GO:0031410">
    <property type="term" value="C:cytoplasmic vesicle"/>
    <property type="evidence" value="ECO:0000318"/>
    <property type="project" value="GO_Central"/>
</dbReference>
<dbReference type="GO" id="GO:0005856">
    <property type="term" value="C:cytoskeleton"/>
    <property type="evidence" value="ECO:0000318"/>
    <property type="project" value="GO_Central"/>
</dbReference>
<dbReference type="GO" id="GO:0005811">
    <property type="term" value="C:lipid droplet"/>
    <property type="evidence" value="ECO:0007005"/>
    <property type="project" value="dictyBase"/>
</dbReference>
<dbReference type="GO" id="GO:0048471">
    <property type="term" value="C:perinuclear region of cytoplasm"/>
    <property type="evidence" value="ECO:0000314"/>
    <property type="project" value="dictyBase"/>
</dbReference>
<dbReference type="GO" id="GO:0001891">
    <property type="term" value="C:phagocytic cup"/>
    <property type="evidence" value="ECO:0000314"/>
    <property type="project" value="dictyBase"/>
</dbReference>
<dbReference type="GO" id="GO:0045335">
    <property type="term" value="C:phagocytic vesicle"/>
    <property type="evidence" value="ECO:0007005"/>
    <property type="project" value="dictyBase"/>
</dbReference>
<dbReference type="GO" id="GO:0005886">
    <property type="term" value="C:plasma membrane"/>
    <property type="evidence" value="ECO:0000314"/>
    <property type="project" value="dictyBase"/>
</dbReference>
<dbReference type="GO" id="GO:0005525">
    <property type="term" value="F:GTP binding"/>
    <property type="evidence" value="ECO:0000314"/>
    <property type="project" value="dictyBase"/>
</dbReference>
<dbReference type="GO" id="GO:0003924">
    <property type="term" value="F:GTPase activity"/>
    <property type="evidence" value="ECO:0000318"/>
    <property type="project" value="GO_Central"/>
</dbReference>
<dbReference type="GO" id="GO:0019901">
    <property type="term" value="F:protein kinase binding"/>
    <property type="evidence" value="ECO:0000353"/>
    <property type="project" value="dictyBase"/>
</dbReference>
<dbReference type="GO" id="GO:0007015">
    <property type="term" value="P:actin filament organization"/>
    <property type="evidence" value="ECO:0000318"/>
    <property type="project" value="GO_Central"/>
</dbReference>
<dbReference type="GO" id="GO:0030865">
    <property type="term" value="P:cortical cytoskeleton organization"/>
    <property type="evidence" value="ECO:0000318"/>
    <property type="project" value="GO_Central"/>
</dbReference>
<dbReference type="GO" id="GO:0007163">
    <property type="term" value="P:establishment or maintenance of cell polarity"/>
    <property type="evidence" value="ECO:0000318"/>
    <property type="project" value="GO_Central"/>
</dbReference>
<dbReference type="GO" id="GO:0000281">
    <property type="term" value="P:mitotic cytokinesis"/>
    <property type="evidence" value="ECO:0000318"/>
    <property type="project" value="GO_Central"/>
</dbReference>
<dbReference type="GO" id="GO:0140676">
    <property type="term" value="P:oscillatory cAMP signaling"/>
    <property type="evidence" value="ECO:0000314"/>
    <property type="project" value="dictyBase"/>
</dbReference>
<dbReference type="GO" id="GO:0030838">
    <property type="term" value="P:positive regulation of actin filament polymerization"/>
    <property type="evidence" value="ECO:0000314"/>
    <property type="project" value="dictyBase"/>
</dbReference>
<dbReference type="GO" id="GO:0016601">
    <property type="term" value="P:Rac protein signal transduction"/>
    <property type="evidence" value="ECO:0000314"/>
    <property type="project" value="dictyBase"/>
</dbReference>
<dbReference type="GO" id="GO:0032956">
    <property type="term" value="P:regulation of actin cytoskeleton organization"/>
    <property type="evidence" value="ECO:0000315"/>
    <property type="project" value="dictyBase"/>
</dbReference>
<dbReference type="GO" id="GO:2000145">
    <property type="term" value="P:regulation of cell motility"/>
    <property type="evidence" value="ECO:0000315"/>
    <property type="project" value="dictyBase"/>
</dbReference>
<dbReference type="GO" id="GO:0008360">
    <property type="term" value="P:regulation of cell shape"/>
    <property type="evidence" value="ECO:0000318"/>
    <property type="project" value="GO_Central"/>
</dbReference>
<dbReference type="GO" id="GO:1902412">
    <property type="term" value="P:regulation of mitotic cytokinesis"/>
    <property type="evidence" value="ECO:0000315"/>
    <property type="project" value="dictyBase"/>
</dbReference>
<dbReference type="GO" id="GO:0007165">
    <property type="term" value="P:signal transduction"/>
    <property type="evidence" value="ECO:0000318"/>
    <property type="project" value="GO_Central"/>
</dbReference>
<dbReference type="CDD" id="cd01871">
    <property type="entry name" value="Rac1_like"/>
    <property type="match status" value="1"/>
</dbReference>
<dbReference type="FunFam" id="3.40.50.300:FF:000088">
    <property type="entry name" value="Ras-related C3 botulinum toxin substrate 1"/>
    <property type="match status" value="1"/>
</dbReference>
<dbReference type="Gene3D" id="3.40.50.300">
    <property type="entry name" value="P-loop containing nucleotide triphosphate hydrolases"/>
    <property type="match status" value="1"/>
</dbReference>
<dbReference type="InterPro" id="IPR027417">
    <property type="entry name" value="P-loop_NTPase"/>
</dbReference>
<dbReference type="InterPro" id="IPR005225">
    <property type="entry name" value="Small_GTP-bd"/>
</dbReference>
<dbReference type="InterPro" id="IPR001806">
    <property type="entry name" value="Small_GTPase"/>
</dbReference>
<dbReference type="InterPro" id="IPR003578">
    <property type="entry name" value="Small_GTPase_Rho"/>
</dbReference>
<dbReference type="NCBIfam" id="TIGR00231">
    <property type="entry name" value="small_GTP"/>
    <property type="match status" value="1"/>
</dbReference>
<dbReference type="PANTHER" id="PTHR24072">
    <property type="entry name" value="RHO FAMILY GTPASE"/>
    <property type="match status" value="1"/>
</dbReference>
<dbReference type="Pfam" id="PF00071">
    <property type="entry name" value="Ras"/>
    <property type="match status" value="1"/>
</dbReference>
<dbReference type="PRINTS" id="PR00449">
    <property type="entry name" value="RASTRNSFRMNG"/>
</dbReference>
<dbReference type="SMART" id="SM00175">
    <property type="entry name" value="RAB"/>
    <property type="match status" value="1"/>
</dbReference>
<dbReference type="SMART" id="SM00176">
    <property type="entry name" value="RAN"/>
    <property type="match status" value="1"/>
</dbReference>
<dbReference type="SMART" id="SM00173">
    <property type="entry name" value="RAS"/>
    <property type="match status" value="1"/>
</dbReference>
<dbReference type="SMART" id="SM00174">
    <property type="entry name" value="RHO"/>
    <property type="match status" value="1"/>
</dbReference>
<dbReference type="SUPFAM" id="SSF52540">
    <property type="entry name" value="P-loop containing nucleoside triphosphate hydrolases"/>
    <property type="match status" value="1"/>
</dbReference>
<dbReference type="PROSITE" id="PS51420">
    <property type="entry name" value="RHO"/>
    <property type="match status" value="1"/>
</dbReference>
<name>RAC1A_DICDI</name>
<proteinExistence type="evidence at protein level"/>
<protein>
    <recommendedName>
        <fullName>Rho-related protein rac1A</fullName>
    </recommendedName>
</protein>
<comment type="function">
    <text evidence="3">Overexpression promotes the formation of filopodia and membrane ruffles.</text>
</comment>
<comment type="subunit">
    <text evidence="3 4 5 6 7">Interacts with forH. Interacts with pakB. May interact with limE. Interacts (in GTP-bound form) with rgaA.</text>
</comment>
<comment type="interaction">
    <interactant intactId="EBI-1808643">
        <id>P34144</id>
    </interactant>
    <interactant intactId="EBI-1808560">
        <id>Q54N00</id>
        <label>forH</label>
    </interactant>
    <organismsDiffer>false</organismsDiffer>
    <experiments>2</experiments>
</comment>
<comment type="interaction">
    <interactant intactId="EBI-1808643">
        <id>P34144</id>
    </interactant>
    <interactant intactId="EBI-1808670">
        <id>Q54K32</id>
        <label>rgaA</label>
    </interactant>
    <organismsDiffer>false</organismsDiffer>
    <experiments>4</experiments>
</comment>
<comment type="subcellular location">
    <subcellularLocation>
        <location evidence="8">Cell membrane</location>
        <topology evidence="8">Lipid-anchor</topology>
        <orientation evidence="8">Cytoplasmic side</orientation>
    </subcellularLocation>
</comment>
<comment type="similarity">
    <text evidence="8">Belongs to the small GTPase superfamily. Rho family.</text>
</comment>
<feature type="chain" id="PRO_0000198895" description="Rho-related protein rac1A">
    <location>
        <begin position="1"/>
        <end position="191"/>
    </location>
</feature>
<feature type="propeptide" id="PRO_0000281246" description="Removed in mature form" evidence="1">
    <location>
        <begin position="192"/>
        <end position="194"/>
    </location>
</feature>
<feature type="short sequence motif" description="Effector region" evidence="2">
    <location>
        <begin position="32"/>
        <end position="40"/>
    </location>
</feature>
<feature type="binding site" evidence="1">
    <location>
        <begin position="10"/>
        <end position="17"/>
    </location>
    <ligand>
        <name>GTP</name>
        <dbReference type="ChEBI" id="CHEBI:37565"/>
    </ligand>
</feature>
<feature type="binding site" evidence="1">
    <location>
        <begin position="57"/>
        <end position="61"/>
    </location>
    <ligand>
        <name>GTP</name>
        <dbReference type="ChEBI" id="CHEBI:37565"/>
    </ligand>
</feature>
<feature type="binding site" evidence="1">
    <location>
        <begin position="115"/>
        <end position="118"/>
    </location>
    <ligand>
        <name>GTP</name>
        <dbReference type="ChEBI" id="CHEBI:37565"/>
    </ligand>
</feature>
<feature type="modified residue" description="Cysteine methyl ester" evidence="1">
    <location>
        <position position="191"/>
    </location>
</feature>
<feature type="lipid moiety-binding region" description="S-geranylgeranyl cysteine" evidence="1">
    <location>
        <position position="191"/>
    </location>
</feature>
<feature type="sequence conflict" description="In Ref. 1; AAC37391." evidence="8" ref="1">
    <original>Q</original>
    <variation>E</variation>
    <location>
        <position position="162"/>
    </location>
</feature>